<keyword id="KW-0975">Bacterial flagellum</keyword>
<keyword id="KW-0574">Periplasm</keyword>
<keyword id="KW-1185">Reference proteome</keyword>
<keyword id="KW-0732">Signal</keyword>
<sequence>MVIKFLSALILLLVTTAAQAERIRDLTSVQGVRQNSLIGYGLVVGLDGTGDQTTQTPFTTQTLNNMLSQLGITVPTGTNMQLKNVAAVMVTASLPPFGRQGQTIDVVVSSMGNAKSLRGGTLLMTPLKGVDSQVYALAQGNILVGGAGASAGGSSVQVNQLNGGRITNGAVIERELPSQFGVGNTLNLQLNDEDFSMAQQIADTINRVRGYGSATALDARTIQVRVPSGNSSQVRFLADIQNMQVNVTPQDAKVVINLRTGSVVMNREVTLDSCAVAQGNLSVTVNRQANVSQPDTPFGGGQTVVTPQTQIDLRQSGGSLQSVRSSASLNNVVRALNALGATPMDLMSILQSMQSAGCLRAKLEII</sequence>
<gene>
    <name evidence="1" type="primary">flgI</name>
    <name type="ordered locus">Ecok1_09710</name>
    <name type="ORF">APECO1_162</name>
</gene>
<proteinExistence type="inferred from homology"/>
<feature type="signal peptide" evidence="1">
    <location>
        <begin position="1"/>
        <end position="20"/>
    </location>
</feature>
<feature type="chain" id="PRO_1000050108" description="Flagellar P-ring protein">
    <location>
        <begin position="21"/>
        <end position="366"/>
    </location>
</feature>
<name>FLGI_ECOK1</name>
<dbReference type="EMBL" id="CP000468">
    <property type="protein sequence ID" value="ABJ00465.1"/>
    <property type="molecule type" value="Genomic_DNA"/>
</dbReference>
<dbReference type="SMR" id="A1A9X5"/>
<dbReference type="KEGG" id="ecv:APECO1_162"/>
<dbReference type="HOGENOM" id="CLU_045235_1_0_6"/>
<dbReference type="Proteomes" id="UP000008216">
    <property type="component" value="Chromosome"/>
</dbReference>
<dbReference type="GO" id="GO:0009428">
    <property type="term" value="C:bacterial-type flagellum basal body, distal rod, P ring"/>
    <property type="evidence" value="ECO:0007669"/>
    <property type="project" value="InterPro"/>
</dbReference>
<dbReference type="GO" id="GO:0030288">
    <property type="term" value="C:outer membrane-bounded periplasmic space"/>
    <property type="evidence" value="ECO:0007669"/>
    <property type="project" value="InterPro"/>
</dbReference>
<dbReference type="GO" id="GO:0005198">
    <property type="term" value="F:structural molecule activity"/>
    <property type="evidence" value="ECO:0007669"/>
    <property type="project" value="InterPro"/>
</dbReference>
<dbReference type="GO" id="GO:0071973">
    <property type="term" value="P:bacterial-type flagellum-dependent cell motility"/>
    <property type="evidence" value="ECO:0007669"/>
    <property type="project" value="InterPro"/>
</dbReference>
<dbReference type="HAMAP" id="MF_00416">
    <property type="entry name" value="FlgI"/>
    <property type="match status" value="1"/>
</dbReference>
<dbReference type="InterPro" id="IPR001782">
    <property type="entry name" value="Flag_FlgI"/>
</dbReference>
<dbReference type="NCBIfam" id="NF003676">
    <property type="entry name" value="PRK05303.1"/>
    <property type="match status" value="1"/>
</dbReference>
<dbReference type="PANTHER" id="PTHR30381">
    <property type="entry name" value="FLAGELLAR P-RING PERIPLASMIC PROTEIN FLGI"/>
    <property type="match status" value="1"/>
</dbReference>
<dbReference type="PANTHER" id="PTHR30381:SF0">
    <property type="entry name" value="FLAGELLAR P-RING PROTEIN"/>
    <property type="match status" value="1"/>
</dbReference>
<dbReference type="Pfam" id="PF02119">
    <property type="entry name" value="FlgI"/>
    <property type="match status" value="1"/>
</dbReference>
<dbReference type="PRINTS" id="PR01010">
    <property type="entry name" value="FLGPRINGFLGI"/>
</dbReference>
<reference key="1">
    <citation type="journal article" date="2007" name="J. Bacteriol.">
        <title>The genome sequence of avian pathogenic Escherichia coli strain O1:K1:H7 shares strong similarities with human extraintestinal pathogenic E. coli genomes.</title>
        <authorList>
            <person name="Johnson T.J."/>
            <person name="Kariyawasam S."/>
            <person name="Wannemuehler Y."/>
            <person name="Mangiamele P."/>
            <person name="Johnson S.J."/>
            <person name="Doetkott C."/>
            <person name="Skyberg J.A."/>
            <person name="Lynne A.M."/>
            <person name="Johnson J.R."/>
            <person name="Nolan L.K."/>
        </authorList>
    </citation>
    <scope>NUCLEOTIDE SEQUENCE [LARGE SCALE GENOMIC DNA]</scope>
</reference>
<organism>
    <name type="scientific">Escherichia coli O1:K1 / APEC</name>
    <dbReference type="NCBI Taxonomy" id="405955"/>
    <lineage>
        <taxon>Bacteria</taxon>
        <taxon>Pseudomonadati</taxon>
        <taxon>Pseudomonadota</taxon>
        <taxon>Gammaproteobacteria</taxon>
        <taxon>Enterobacterales</taxon>
        <taxon>Enterobacteriaceae</taxon>
        <taxon>Escherichia</taxon>
    </lineage>
</organism>
<comment type="function">
    <text evidence="1">Assembles around the rod to form the L-ring and probably protects the motor/basal body from shearing forces during rotation.</text>
</comment>
<comment type="subunit">
    <text evidence="1">The basal body constitutes a major portion of the flagellar organelle and consists of four rings (L,P,S, and M) mounted on a central rod.</text>
</comment>
<comment type="subcellular location">
    <subcellularLocation>
        <location evidence="1">Periplasm</location>
    </subcellularLocation>
    <subcellularLocation>
        <location evidence="1">Bacterial flagellum basal body</location>
    </subcellularLocation>
</comment>
<comment type="similarity">
    <text evidence="1">Belongs to the FlgI family.</text>
</comment>
<protein>
    <recommendedName>
        <fullName evidence="1">Flagellar P-ring protein</fullName>
    </recommendedName>
    <alternativeName>
        <fullName evidence="1">Basal body P-ring protein</fullName>
    </alternativeName>
</protein>
<evidence type="ECO:0000255" key="1">
    <source>
        <dbReference type="HAMAP-Rule" id="MF_00416"/>
    </source>
</evidence>
<accession>A1A9X5</accession>